<keyword id="KW-1185">Reference proteome</keyword>
<protein>
    <recommendedName>
        <fullName>Protein LURP-one-related 5</fullName>
    </recommendedName>
</protein>
<sequence length="210" mass="23454">MKGGLLVDDEFIHGEERSLTVRKTSLFFAGDGFTVYDCKGSLVFRVDSYGGPNTRDTDEVVLMDAHGRCLLTLRRKRPSLRRRWEGYLGERSDGQKPIFGVRRSSIIGRNSVTVEVYGDYQCSEYLIEGSFGARNCTVVEAETRRKVAEIRRKVDASTNVMLGKDVFSLNVKPGFDGAFAMGLVLVLDQIYGDDLLEVGEEQVHPSAEDL</sequence>
<accession>Q9SSC7</accession>
<proteinExistence type="evidence at transcript level"/>
<reference key="1">
    <citation type="journal article" date="2000" name="Nature">
        <title>Sequence and analysis of chromosome 1 of the plant Arabidopsis thaliana.</title>
        <authorList>
            <person name="Theologis A."/>
            <person name="Ecker J.R."/>
            <person name="Palm C.J."/>
            <person name="Federspiel N.A."/>
            <person name="Kaul S."/>
            <person name="White O."/>
            <person name="Alonso J."/>
            <person name="Altafi H."/>
            <person name="Araujo R."/>
            <person name="Bowman C.L."/>
            <person name="Brooks S.Y."/>
            <person name="Buehler E."/>
            <person name="Chan A."/>
            <person name="Chao Q."/>
            <person name="Chen H."/>
            <person name="Cheuk R.F."/>
            <person name="Chin C.W."/>
            <person name="Chung M.K."/>
            <person name="Conn L."/>
            <person name="Conway A.B."/>
            <person name="Conway A.R."/>
            <person name="Creasy T.H."/>
            <person name="Dewar K."/>
            <person name="Dunn P."/>
            <person name="Etgu P."/>
            <person name="Feldblyum T.V."/>
            <person name="Feng J.-D."/>
            <person name="Fong B."/>
            <person name="Fujii C.Y."/>
            <person name="Gill J.E."/>
            <person name="Goldsmith A.D."/>
            <person name="Haas B."/>
            <person name="Hansen N.F."/>
            <person name="Hughes B."/>
            <person name="Huizar L."/>
            <person name="Hunter J.L."/>
            <person name="Jenkins J."/>
            <person name="Johnson-Hopson C."/>
            <person name="Khan S."/>
            <person name="Khaykin E."/>
            <person name="Kim C.J."/>
            <person name="Koo H.L."/>
            <person name="Kremenetskaia I."/>
            <person name="Kurtz D.B."/>
            <person name="Kwan A."/>
            <person name="Lam B."/>
            <person name="Langin-Hooper S."/>
            <person name="Lee A."/>
            <person name="Lee J.M."/>
            <person name="Lenz C.A."/>
            <person name="Li J.H."/>
            <person name="Li Y.-P."/>
            <person name="Lin X."/>
            <person name="Liu S.X."/>
            <person name="Liu Z.A."/>
            <person name="Luros J.S."/>
            <person name="Maiti R."/>
            <person name="Marziali A."/>
            <person name="Militscher J."/>
            <person name="Miranda M."/>
            <person name="Nguyen M."/>
            <person name="Nierman W.C."/>
            <person name="Osborne B.I."/>
            <person name="Pai G."/>
            <person name="Peterson J."/>
            <person name="Pham P.K."/>
            <person name="Rizzo M."/>
            <person name="Rooney T."/>
            <person name="Rowley D."/>
            <person name="Sakano H."/>
            <person name="Salzberg S.L."/>
            <person name="Schwartz J.R."/>
            <person name="Shinn P."/>
            <person name="Southwick A.M."/>
            <person name="Sun H."/>
            <person name="Tallon L.J."/>
            <person name="Tambunga G."/>
            <person name="Toriumi M.J."/>
            <person name="Town C.D."/>
            <person name="Utterback T."/>
            <person name="Van Aken S."/>
            <person name="Vaysberg M."/>
            <person name="Vysotskaia V.S."/>
            <person name="Walker M."/>
            <person name="Wu D."/>
            <person name="Yu G."/>
            <person name="Fraser C.M."/>
            <person name="Venter J.C."/>
            <person name="Davis R.W."/>
        </authorList>
    </citation>
    <scope>NUCLEOTIDE SEQUENCE [LARGE SCALE GENOMIC DNA]</scope>
    <source>
        <strain>cv. Columbia</strain>
    </source>
</reference>
<reference key="2">
    <citation type="journal article" date="2017" name="Plant J.">
        <title>Araport11: a complete reannotation of the Arabidopsis thaliana reference genome.</title>
        <authorList>
            <person name="Cheng C.Y."/>
            <person name="Krishnakumar V."/>
            <person name="Chan A.P."/>
            <person name="Thibaud-Nissen F."/>
            <person name="Schobel S."/>
            <person name="Town C.D."/>
        </authorList>
    </citation>
    <scope>GENOME REANNOTATION</scope>
    <source>
        <strain>cv. Columbia</strain>
    </source>
</reference>
<reference key="3">
    <citation type="journal article" date="2003" name="Science">
        <title>Empirical analysis of transcriptional activity in the Arabidopsis genome.</title>
        <authorList>
            <person name="Yamada K."/>
            <person name="Lim J."/>
            <person name="Dale J.M."/>
            <person name="Chen H."/>
            <person name="Shinn P."/>
            <person name="Palm C.J."/>
            <person name="Southwick A.M."/>
            <person name="Wu H.C."/>
            <person name="Kim C.J."/>
            <person name="Nguyen M."/>
            <person name="Pham P.K."/>
            <person name="Cheuk R.F."/>
            <person name="Karlin-Newmann G."/>
            <person name="Liu S.X."/>
            <person name="Lam B."/>
            <person name="Sakano H."/>
            <person name="Wu T."/>
            <person name="Yu G."/>
            <person name="Miranda M."/>
            <person name="Quach H.L."/>
            <person name="Tripp M."/>
            <person name="Chang C.H."/>
            <person name="Lee J.M."/>
            <person name="Toriumi M.J."/>
            <person name="Chan M.M."/>
            <person name="Tang C.C."/>
            <person name="Onodera C.S."/>
            <person name="Deng J.M."/>
            <person name="Akiyama K."/>
            <person name="Ansari Y."/>
            <person name="Arakawa T."/>
            <person name="Banh J."/>
            <person name="Banno F."/>
            <person name="Bowser L."/>
            <person name="Brooks S.Y."/>
            <person name="Carninci P."/>
            <person name="Chao Q."/>
            <person name="Choy N."/>
            <person name="Enju A."/>
            <person name="Goldsmith A.D."/>
            <person name="Gurjal M."/>
            <person name="Hansen N.F."/>
            <person name="Hayashizaki Y."/>
            <person name="Johnson-Hopson C."/>
            <person name="Hsuan V.W."/>
            <person name="Iida K."/>
            <person name="Karnes M."/>
            <person name="Khan S."/>
            <person name="Koesema E."/>
            <person name="Ishida J."/>
            <person name="Jiang P.X."/>
            <person name="Jones T."/>
            <person name="Kawai J."/>
            <person name="Kamiya A."/>
            <person name="Meyers C."/>
            <person name="Nakajima M."/>
            <person name="Narusaka M."/>
            <person name="Seki M."/>
            <person name="Sakurai T."/>
            <person name="Satou M."/>
            <person name="Tamse R."/>
            <person name="Vaysberg M."/>
            <person name="Wallender E.K."/>
            <person name="Wong C."/>
            <person name="Yamamura Y."/>
            <person name="Yuan S."/>
            <person name="Shinozaki K."/>
            <person name="Davis R.W."/>
            <person name="Theologis A."/>
            <person name="Ecker J.R."/>
        </authorList>
    </citation>
    <scope>NUCLEOTIDE SEQUENCE [LARGE SCALE MRNA]</scope>
    <source>
        <strain>cv. Columbia</strain>
    </source>
</reference>
<name>LOR5_ARATH</name>
<evidence type="ECO:0000250" key="1"/>
<evidence type="ECO:0000305" key="2"/>
<gene>
    <name type="ordered locus">At1g80120</name>
    <name type="ORF">F18B13.20</name>
</gene>
<comment type="function">
    <text evidence="1">Might be related to the phospholipid scramblase and tubby-like superfamily of membrane tethered transcription factors.</text>
</comment>
<comment type="similarity">
    <text evidence="2">Belongs to the LOR family.</text>
</comment>
<organism>
    <name type="scientific">Arabidopsis thaliana</name>
    <name type="common">Mouse-ear cress</name>
    <dbReference type="NCBI Taxonomy" id="3702"/>
    <lineage>
        <taxon>Eukaryota</taxon>
        <taxon>Viridiplantae</taxon>
        <taxon>Streptophyta</taxon>
        <taxon>Embryophyta</taxon>
        <taxon>Tracheophyta</taxon>
        <taxon>Spermatophyta</taxon>
        <taxon>Magnoliopsida</taxon>
        <taxon>eudicotyledons</taxon>
        <taxon>Gunneridae</taxon>
        <taxon>Pentapetalae</taxon>
        <taxon>rosids</taxon>
        <taxon>malvids</taxon>
        <taxon>Brassicales</taxon>
        <taxon>Brassicaceae</taxon>
        <taxon>Camelineae</taxon>
        <taxon>Arabidopsis</taxon>
    </lineage>
</organism>
<feature type="chain" id="PRO_0000399237" description="Protein LURP-one-related 5">
    <location>
        <begin position="1"/>
        <end position="210"/>
    </location>
</feature>
<dbReference type="EMBL" id="AC009322">
    <property type="protein sequence ID" value="AAD55470.1"/>
    <property type="molecule type" value="Genomic_DNA"/>
</dbReference>
<dbReference type="EMBL" id="CP002684">
    <property type="protein sequence ID" value="AEE36359.1"/>
    <property type="molecule type" value="Genomic_DNA"/>
</dbReference>
<dbReference type="EMBL" id="BT004042">
    <property type="protein sequence ID" value="AAO42075.1"/>
    <property type="molecule type" value="mRNA"/>
</dbReference>
<dbReference type="EMBL" id="BT005160">
    <property type="protein sequence ID" value="AAO50693.1"/>
    <property type="molecule type" value="mRNA"/>
</dbReference>
<dbReference type="PIR" id="G96832">
    <property type="entry name" value="G96832"/>
</dbReference>
<dbReference type="RefSeq" id="NP_178129.1">
    <property type="nucleotide sequence ID" value="NM_106661.3"/>
</dbReference>
<dbReference type="SMR" id="Q9SSC7"/>
<dbReference type="BioGRID" id="29570">
    <property type="interactions" value="5"/>
</dbReference>
<dbReference type="IntAct" id="Q9SSC7">
    <property type="interactions" value="5"/>
</dbReference>
<dbReference type="PaxDb" id="3702-AT1G80120.1"/>
<dbReference type="ProteomicsDB" id="238453"/>
<dbReference type="DNASU" id="844352"/>
<dbReference type="EnsemblPlants" id="AT1G80120.1">
    <property type="protein sequence ID" value="AT1G80120.1"/>
    <property type="gene ID" value="AT1G80120"/>
</dbReference>
<dbReference type="GeneID" id="844352"/>
<dbReference type="Gramene" id="AT1G80120.1">
    <property type="protein sequence ID" value="AT1G80120.1"/>
    <property type="gene ID" value="AT1G80120"/>
</dbReference>
<dbReference type="KEGG" id="ath:AT1G80120"/>
<dbReference type="Araport" id="AT1G80120"/>
<dbReference type="TAIR" id="AT1G80120"/>
<dbReference type="eggNOG" id="ENOG502QQV0">
    <property type="taxonomic scope" value="Eukaryota"/>
</dbReference>
<dbReference type="HOGENOM" id="CLU_063146_3_1_1"/>
<dbReference type="InParanoid" id="Q9SSC7"/>
<dbReference type="OMA" id="HRWEGYL"/>
<dbReference type="PhylomeDB" id="Q9SSC7"/>
<dbReference type="PRO" id="PR:Q9SSC7"/>
<dbReference type="Proteomes" id="UP000006548">
    <property type="component" value="Chromosome 1"/>
</dbReference>
<dbReference type="ExpressionAtlas" id="Q9SSC7">
    <property type="expression patterns" value="baseline and differential"/>
</dbReference>
<dbReference type="Gene3D" id="2.40.160.200">
    <property type="entry name" value="LURP1-related"/>
    <property type="match status" value="1"/>
</dbReference>
<dbReference type="InterPro" id="IPR007612">
    <property type="entry name" value="LOR"/>
</dbReference>
<dbReference type="InterPro" id="IPR038595">
    <property type="entry name" value="LOR_sf"/>
</dbReference>
<dbReference type="InterPro" id="IPR025659">
    <property type="entry name" value="Tubby-like_C"/>
</dbReference>
<dbReference type="PANTHER" id="PTHR31087">
    <property type="match status" value="1"/>
</dbReference>
<dbReference type="PANTHER" id="PTHR31087:SF60">
    <property type="entry name" value="PROTEIN LURP-ONE-RELATED 5"/>
    <property type="match status" value="1"/>
</dbReference>
<dbReference type="Pfam" id="PF04525">
    <property type="entry name" value="LOR"/>
    <property type="match status" value="1"/>
</dbReference>
<dbReference type="SUPFAM" id="SSF54518">
    <property type="entry name" value="Tubby C-terminal domain-like"/>
    <property type="match status" value="1"/>
</dbReference>